<protein>
    <recommendedName>
        <fullName evidence="1">Large ribosomal subunit protein bL33</fullName>
    </recommendedName>
    <alternativeName>
        <fullName evidence="2">50S ribosomal protein L33</fullName>
    </alternativeName>
</protein>
<organism>
    <name type="scientific">Yersinia pseudotuberculosis serotype O:3 (strain YPIII)</name>
    <dbReference type="NCBI Taxonomy" id="502800"/>
    <lineage>
        <taxon>Bacteria</taxon>
        <taxon>Pseudomonadati</taxon>
        <taxon>Pseudomonadota</taxon>
        <taxon>Gammaproteobacteria</taxon>
        <taxon>Enterobacterales</taxon>
        <taxon>Yersiniaceae</taxon>
        <taxon>Yersinia</taxon>
    </lineage>
</organism>
<feature type="chain" id="PRO_1000115170" description="Large ribosomal subunit protein bL33">
    <location>
        <begin position="1"/>
        <end position="55"/>
    </location>
</feature>
<evidence type="ECO:0000255" key="1">
    <source>
        <dbReference type="HAMAP-Rule" id="MF_00294"/>
    </source>
</evidence>
<evidence type="ECO:0000305" key="2"/>
<reference key="1">
    <citation type="submission" date="2008-02" db="EMBL/GenBank/DDBJ databases">
        <title>Complete sequence of Yersinia pseudotuberculosis YPIII.</title>
        <authorList>
            <consortium name="US DOE Joint Genome Institute"/>
            <person name="Copeland A."/>
            <person name="Lucas S."/>
            <person name="Lapidus A."/>
            <person name="Glavina del Rio T."/>
            <person name="Dalin E."/>
            <person name="Tice H."/>
            <person name="Bruce D."/>
            <person name="Goodwin L."/>
            <person name="Pitluck S."/>
            <person name="Munk A.C."/>
            <person name="Brettin T."/>
            <person name="Detter J.C."/>
            <person name="Han C."/>
            <person name="Tapia R."/>
            <person name="Schmutz J."/>
            <person name="Larimer F."/>
            <person name="Land M."/>
            <person name="Hauser L."/>
            <person name="Challacombe J.F."/>
            <person name="Green L."/>
            <person name="Lindler L.E."/>
            <person name="Nikolich M.P."/>
            <person name="Richardson P."/>
        </authorList>
    </citation>
    <scope>NUCLEOTIDE SEQUENCE [LARGE SCALE GENOMIC DNA]</scope>
    <source>
        <strain>YPIII</strain>
    </source>
</reference>
<keyword id="KW-0687">Ribonucleoprotein</keyword>
<keyword id="KW-0689">Ribosomal protein</keyword>
<name>RL33_YERPY</name>
<sequence>MAKGVREKIKLVSSAGTGHFYTTTKNKRTKPEKLELKKFDPVVRQHVLYKEAKIK</sequence>
<accession>B1JQX1</accession>
<proteinExistence type="inferred from homology"/>
<dbReference type="EMBL" id="CP000950">
    <property type="protein sequence ID" value="ACA70412.1"/>
    <property type="molecule type" value="Genomic_DNA"/>
</dbReference>
<dbReference type="RefSeq" id="WP_002208990.1">
    <property type="nucleotide sequence ID" value="NZ_CP009792.1"/>
</dbReference>
<dbReference type="SMR" id="B1JQX1"/>
<dbReference type="GeneID" id="96663532"/>
<dbReference type="KEGG" id="ypy:YPK_4153"/>
<dbReference type="PATRIC" id="fig|502800.11.peg.504"/>
<dbReference type="GO" id="GO:0022625">
    <property type="term" value="C:cytosolic large ribosomal subunit"/>
    <property type="evidence" value="ECO:0007669"/>
    <property type="project" value="TreeGrafter"/>
</dbReference>
<dbReference type="GO" id="GO:0003735">
    <property type="term" value="F:structural constituent of ribosome"/>
    <property type="evidence" value="ECO:0007669"/>
    <property type="project" value="InterPro"/>
</dbReference>
<dbReference type="GO" id="GO:0006412">
    <property type="term" value="P:translation"/>
    <property type="evidence" value="ECO:0007669"/>
    <property type="project" value="UniProtKB-UniRule"/>
</dbReference>
<dbReference type="FunFam" id="2.20.28.120:FF:000001">
    <property type="entry name" value="50S ribosomal protein L33"/>
    <property type="match status" value="1"/>
</dbReference>
<dbReference type="Gene3D" id="2.20.28.120">
    <property type="entry name" value="Ribosomal protein L33"/>
    <property type="match status" value="1"/>
</dbReference>
<dbReference type="HAMAP" id="MF_00294">
    <property type="entry name" value="Ribosomal_bL33"/>
    <property type="match status" value="1"/>
</dbReference>
<dbReference type="InterPro" id="IPR001705">
    <property type="entry name" value="Ribosomal_bL33"/>
</dbReference>
<dbReference type="InterPro" id="IPR018264">
    <property type="entry name" value="Ribosomal_bL33_CS"/>
</dbReference>
<dbReference type="InterPro" id="IPR038584">
    <property type="entry name" value="Ribosomal_bL33_sf"/>
</dbReference>
<dbReference type="InterPro" id="IPR011332">
    <property type="entry name" value="Ribosomal_zn-bd"/>
</dbReference>
<dbReference type="NCBIfam" id="NF001860">
    <property type="entry name" value="PRK00595.1"/>
    <property type="match status" value="1"/>
</dbReference>
<dbReference type="NCBIfam" id="TIGR01023">
    <property type="entry name" value="rpmG_bact"/>
    <property type="match status" value="1"/>
</dbReference>
<dbReference type="PANTHER" id="PTHR15238">
    <property type="entry name" value="54S RIBOSOMAL PROTEIN L39, MITOCHONDRIAL"/>
    <property type="match status" value="1"/>
</dbReference>
<dbReference type="PANTHER" id="PTHR15238:SF1">
    <property type="entry name" value="LARGE RIBOSOMAL SUBUNIT PROTEIN BL33M"/>
    <property type="match status" value="1"/>
</dbReference>
<dbReference type="Pfam" id="PF00471">
    <property type="entry name" value="Ribosomal_L33"/>
    <property type="match status" value="1"/>
</dbReference>
<dbReference type="SUPFAM" id="SSF57829">
    <property type="entry name" value="Zn-binding ribosomal proteins"/>
    <property type="match status" value="1"/>
</dbReference>
<dbReference type="PROSITE" id="PS00582">
    <property type="entry name" value="RIBOSOMAL_L33"/>
    <property type="match status" value="1"/>
</dbReference>
<comment type="similarity">
    <text evidence="1">Belongs to the bacterial ribosomal protein bL33 family.</text>
</comment>
<gene>
    <name evidence="1" type="primary">rpmG</name>
    <name type="ordered locus">YPK_4153</name>
</gene>